<dbReference type="EC" id="3.4.23.36" evidence="1"/>
<dbReference type="EMBL" id="CP000049">
    <property type="protein sequence ID" value="AAX17798.1"/>
    <property type="molecule type" value="Genomic_DNA"/>
</dbReference>
<dbReference type="RefSeq" id="WP_011772417.1">
    <property type="nucleotide sequence ID" value="NZ_CP073176.1"/>
</dbReference>
<dbReference type="SMR" id="A1QZQ6"/>
<dbReference type="KEGG" id="btu:BT0469"/>
<dbReference type="eggNOG" id="COG0597">
    <property type="taxonomic scope" value="Bacteria"/>
</dbReference>
<dbReference type="HOGENOM" id="CLU_083252_3_1_12"/>
<dbReference type="UniPathway" id="UPA00665"/>
<dbReference type="Proteomes" id="UP000001205">
    <property type="component" value="Chromosome"/>
</dbReference>
<dbReference type="GO" id="GO:0005886">
    <property type="term" value="C:plasma membrane"/>
    <property type="evidence" value="ECO:0007669"/>
    <property type="project" value="UniProtKB-SubCell"/>
</dbReference>
<dbReference type="GO" id="GO:0004190">
    <property type="term" value="F:aspartic-type endopeptidase activity"/>
    <property type="evidence" value="ECO:0007669"/>
    <property type="project" value="UniProtKB-UniRule"/>
</dbReference>
<dbReference type="GO" id="GO:0006508">
    <property type="term" value="P:proteolysis"/>
    <property type="evidence" value="ECO:0007669"/>
    <property type="project" value="UniProtKB-KW"/>
</dbReference>
<dbReference type="HAMAP" id="MF_00161">
    <property type="entry name" value="LspA"/>
    <property type="match status" value="1"/>
</dbReference>
<dbReference type="InterPro" id="IPR001872">
    <property type="entry name" value="Peptidase_A8"/>
</dbReference>
<dbReference type="NCBIfam" id="TIGR00077">
    <property type="entry name" value="lspA"/>
    <property type="match status" value="1"/>
</dbReference>
<dbReference type="PANTHER" id="PTHR33695">
    <property type="entry name" value="LIPOPROTEIN SIGNAL PEPTIDASE"/>
    <property type="match status" value="1"/>
</dbReference>
<dbReference type="PANTHER" id="PTHR33695:SF1">
    <property type="entry name" value="LIPOPROTEIN SIGNAL PEPTIDASE"/>
    <property type="match status" value="1"/>
</dbReference>
<dbReference type="Pfam" id="PF01252">
    <property type="entry name" value="Peptidase_A8"/>
    <property type="match status" value="1"/>
</dbReference>
<dbReference type="PRINTS" id="PR00781">
    <property type="entry name" value="LIPOSIGPTASE"/>
</dbReference>
<dbReference type="PROSITE" id="PS00855">
    <property type="entry name" value="SPASE_II"/>
    <property type="match status" value="1"/>
</dbReference>
<accession>A1QZQ6</accession>
<gene>
    <name evidence="1" type="primary">lspA</name>
    <name type="ordered locus">BT0469</name>
</gene>
<evidence type="ECO:0000255" key="1">
    <source>
        <dbReference type="HAMAP-Rule" id="MF_00161"/>
    </source>
</evidence>
<name>LSPA_BORT9</name>
<keyword id="KW-0064">Aspartyl protease</keyword>
<keyword id="KW-0997">Cell inner membrane</keyword>
<keyword id="KW-1003">Cell membrane</keyword>
<keyword id="KW-0378">Hydrolase</keyword>
<keyword id="KW-0472">Membrane</keyword>
<keyword id="KW-0645">Protease</keyword>
<keyword id="KW-1185">Reference proteome</keyword>
<keyword id="KW-0812">Transmembrane</keyword>
<keyword id="KW-1133">Transmembrane helix</keyword>
<comment type="function">
    <text evidence="1">This protein specifically catalyzes the removal of signal peptides from prolipoproteins.</text>
</comment>
<comment type="catalytic activity">
    <reaction evidence="1">
        <text>Release of signal peptides from bacterial membrane prolipoproteins. Hydrolyzes -Xaa-Yaa-Zaa-|-(S,diacylglyceryl)Cys-, in which Xaa is hydrophobic (preferably Leu), and Yaa (Ala or Ser) and Zaa (Gly or Ala) have small, neutral side chains.</text>
        <dbReference type="EC" id="3.4.23.36"/>
    </reaction>
</comment>
<comment type="pathway">
    <text evidence="1">Protein modification; lipoprotein biosynthesis (signal peptide cleavage).</text>
</comment>
<comment type="subcellular location">
    <subcellularLocation>
        <location evidence="1">Cell inner membrane</location>
        <topology evidence="1">Multi-pass membrane protein</topology>
    </subcellularLocation>
</comment>
<comment type="similarity">
    <text evidence="1">Belongs to the peptidase A8 family.</text>
</comment>
<reference key="1">
    <citation type="submission" date="2004-12" db="EMBL/GenBank/DDBJ databases">
        <title>The genome sequence of Borrelia hermsii and Borrelia turicatae: comparative analysis of two agents of endemic N. America relapsing fever.</title>
        <authorList>
            <person name="Porcella S.F."/>
            <person name="Raffel S.J."/>
            <person name="Schrumpf M.E."/>
            <person name="Montgomery B."/>
            <person name="Smith T."/>
            <person name="Schwan T.G."/>
        </authorList>
    </citation>
    <scope>NUCLEOTIDE SEQUENCE [LARGE SCALE GENOMIC DNA]</scope>
    <source>
        <strain>91E135</strain>
    </source>
</reference>
<feature type="chain" id="PRO_1000123488" description="Lipoprotein signal peptidase">
    <location>
        <begin position="1"/>
        <end position="170"/>
    </location>
</feature>
<feature type="transmembrane region" description="Helical" evidence="1">
    <location>
        <begin position="13"/>
        <end position="33"/>
    </location>
</feature>
<feature type="transmembrane region" description="Helical" evidence="1">
    <location>
        <begin position="72"/>
        <end position="92"/>
    </location>
</feature>
<feature type="transmembrane region" description="Helical" evidence="1">
    <location>
        <begin position="96"/>
        <end position="113"/>
    </location>
</feature>
<feature type="transmembrane region" description="Helical" evidence="1">
    <location>
        <begin position="142"/>
        <end position="162"/>
    </location>
</feature>
<feature type="active site" evidence="1">
    <location>
        <position position="124"/>
    </location>
</feature>
<feature type="active site" evidence="1">
    <location>
        <position position="146"/>
    </location>
</feature>
<protein>
    <recommendedName>
        <fullName evidence="1">Lipoprotein signal peptidase</fullName>
        <ecNumber evidence="1">3.4.23.36</ecNumber>
    </recommendedName>
    <alternativeName>
        <fullName evidence="1">Prolipoprotein signal peptidase</fullName>
    </alternativeName>
    <alternativeName>
        <fullName evidence="1">Signal peptidase II</fullName>
        <shortName evidence="1">SPase II</shortName>
    </alternativeName>
</protein>
<proteinExistence type="inferred from homology"/>
<sequence length="170" mass="19686">MNINRSRLINNFIFISILVFFDQWSKYLVVKYIRIGTEYLSFFGDFFKIIHVRNTGVLFSIGSNIDPSLKNLFFLIIPIIILIFVFSFALKETNRIARIALVLILSGGIGNIIDRFFRPLGVVDFLDVKFFGIFGLQRWPTFNFADSYVVIGITLFIIYDLFAKNQSTNL</sequence>
<organism>
    <name type="scientific">Borrelia turicatae (strain 91E135)</name>
    <dbReference type="NCBI Taxonomy" id="314724"/>
    <lineage>
        <taxon>Bacteria</taxon>
        <taxon>Pseudomonadati</taxon>
        <taxon>Spirochaetota</taxon>
        <taxon>Spirochaetia</taxon>
        <taxon>Spirochaetales</taxon>
        <taxon>Borreliaceae</taxon>
        <taxon>Borrelia</taxon>
    </lineage>
</organism>